<name>KC1D_PONAB</name>
<keyword id="KW-0067">ATP-binding</keyword>
<keyword id="KW-0090">Biological rhythms</keyword>
<keyword id="KW-1003">Cell membrane</keyword>
<keyword id="KW-0963">Cytoplasm</keyword>
<keyword id="KW-0206">Cytoskeleton</keyword>
<keyword id="KW-0333">Golgi apparatus</keyword>
<keyword id="KW-0418">Kinase</keyword>
<keyword id="KW-0472">Membrane</keyword>
<keyword id="KW-0488">Methylation</keyword>
<keyword id="KW-0547">Nucleotide-binding</keyword>
<keyword id="KW-0539">Nucleus</keyword>
<keyword id="KW-0597">Phosphoprotein</keyword>
<keyword id="KW-1185">Reference proteome</keyword>
<keyword id="KW-0723">Serine/threonine-protein kinase</keyword>
<keyword id="KW-0808">Transferase</keyword>
<keyword id="KW-0879">Wnt signaling pathway</keyword>
<accession>Q5RC72</accession>
<comment type="function">
    <text evidence="2 4">Essential serine/threonine-protein kinase that regulates diverse cellular growth and survival processes including Wnt signaling, DNA repair and circadian rhythms. It can phosphorylate a large number of proteins. Casein kinases are operationally defined by their preferential utilization of acidic proteins such as caseins as substrates. Phosphorylates connexin-43/GJA1, MAP1A, SNAPIN, MAPT/TAU, TOP2A, DCK, HIF1A, EIF6, p53/TP53, DVL2, DVL3, ESR1, AIB1/NCOA3, DNMT1, PKD2, YAP1, PER1 and PER2. Central component of the circadian clock. In balance with PP1, determines the circadian period length through the regulation of the speed and rhythmicity of PER1 and PER2 phosphorylation. Controls PER1 and PER2 nuclear transport and degradation. YAP1 phosphorylation promotes its SCF(beta-TRCP) E3 ubiquitin ligase-mediated ubiquitination and subsequent degradation. DNMT1 phosphorylation reduces its DNA-binding activity. Phosphorylation of ESR1 and AIB1/NCOA3 stimulates their activity and coactivation. Phosphorylation of DVL2 and DVL3 regulates WNT3A signaling pathway that controls neurite outgrowth. Phosphorylates NEDD9/HEF1 (By similarity). EIF6 phosphorylation promotes its nuclear export. Triggers down-regulation of dopamine receptors in the forebrain. Activates DCK in vitro by phosphorylation. TOP2A phosphorylation favors DNA cleavable complex formation. May regulate the formation of the mitotic spindle apparatus in extravillous trophoblast. Modulates connexin-43/GJA1 gap junction assembly by phosphorylation. Probably involved in lymphocyte physiology. Regulates fast synaptic transmission mediated by glutamate (By similarity).</text>
</comment>
<comment type="catalytic activity">
    <reaction evidence="2">
        <text>L-seryl-[protein] + ATP = O-phospho-L-seryl-[protein] + ADP + H(+)</text>
        <dbReference type="Rhea" id="RHEA:17989"/>
        <dbReference type="Rhea" id="RHEA-COMP:9863"/>
        <dbReference type="Rhea" id="RHEA-COMP:11604"/>
        <dbReference type="ChEBI" id="CHEBI:15378"/>
        <dbReference type="ChEBI" id="CHEBI:29999"/>
        <dbReference type="ChEBI" id="CHEBI:30616"/>
        <dbReference type="ChEBI" id="CHEBI:83421"/>
        <dbReference type="ChEBI" id="CHEBI:456216"/>
        <dbReference type="EC" id="2.7.11.1"/>
    </reaction>
    <physiologicalReaction direction="left-to-right" evidence="2">
        <dbReference type="Rhea" id="RHEA:17990"/>
    </physiologicalReaction>
</comment>
<comment type="catalytic activity">
    <reaction evidence="2">
        <text>L-threonyl-[protein] + ATP = O-phospho-L-threonyl-[protein] + ADP + H(+)</text>
        <dbReference type="Rhea" id="RHEA:46608"/>
        <dbReference type="Rhea" id="RHEA-COMP:11060"/>
        <dbReference type="Rhea" id="RHEA-COMP:11605"/>
        <dbReference type="ChEBI" id="CHEBI:15378"/>
        <dbReference type="ChEBI" id="CHEBI:30013"/>
        <dbReference type="ChEBI" id="CHEBI:30616"/>
        <dbReference type="ChEBI" id="CHEBI:61977"/>
        <dbReference type="ChEBI" id="CHEBI:456216"/>
        <dbReference type="EC" id="2.7.11.1"/>
    </reaction>
    <physiologicalReaction direction="left-to-right" evidence="2">
        <dbReference type="Rhea" id="RHEA:46609"/>
    </physiologicalReaction>
</comment>
<comment type="catalytic activity">
    <reaction evidence="2">
        <text>L-seryl-[tau protein] + ATP = O-phospho-L-seryl-[tau protein] + ADP + H(+)</text>
        <dbReference type="Rhea" id="RHEA:12801"/>
        <dbReference type="Rhea" id="RHEA-COMP:13701"/>
        <dbReference type="Rhea" id="RHEA-COMP:13702"/>
        <dbReference type="ChEBI" id="CHEBI:15378"/>
        <dbReference type="ChEBI" id="CHEBI:29999"/>
        <dbReference type="ChEBI" id="CHEBI:30616"/>
        <dbReference type="ChEBI" id="CHEBI:83421"/>
        <dbReference type="ChEBI" id="CHEBI:456216"/>
        <dbReference type="EC" id="2.7.11.26"/>
    </reaction>
    <physiologicalReaction direction="left-to-right" evidence="2">
        <dbReference type="Rhea" id="RHEA:12802"/>
    </physiologicalReaction>
</comment>
<comment type="catalytic activity">
    <reaction evidence="2">
        <text>L-threonyl-[tau protein] + ATP = O-phospho-L-threonyl-[tau protein] + ADP + H(+)</text>
        <dbReference type="Rhea" id="RHEA:53904"/>
        <dbReference type="Rhea" id="RHEA-COMP:13703"/>
        <dbReference type="Rhea" id="RHEA-COMP:13704"/>
        <dbReference type="ChEBI" id="CHEBI:15378"/>
        <dbReference type="ChEBI" id="CHEBI:30013"/>
        <dbReference type="ChEBI" id="CHEBI:30616"/>
        <dbReference type="ChEBI" id="CHEBI:61977"/>
        <dbReference type="ChEBI" id="CHEBI:456216"/>
        <dbReference type="EC" id="2.7.11.26"/>
    </reaction>
    <physiologicalReaction direction="left-to-right" evidence="2">
        <dbReference type="Rhea" id="RHEA:53905"/>
    </physiologicalReaction>
</comment>
<comment type="activity regulation">
    <text evidence="2">Exhibits substrate-dependent heparin activation. Drug-mediated inhibition leads to a delay of the oscillations with the magnitude of this effect dependent upon the timing of drug administration. Inhibited by phosphorylation (By similarity).</text>
</comment>
<comment type="subunit">
    <text evidence="2 3 4">Monomer (By similarity). Component of the circadian core oscillator, which includes the CRY proteins, CLOCK, or NPAS2, ARTNL/BMAL1 or ARTNL2/BMAL2, CSNK1D and/or CSNK1E, TIMELESS and the PER proteins (By similarity). Interacts with DNMT1 and MAP1A (By similarity). Interacts directly with PER1 and PER2 which may lead to their degradation (By similarity). Interacts with MAPT/TAU, SNAPIN, DBNDD2, AIB1/NCOA3 and ESR1 (By similarity). Interacts with AKAP9/AKAP450; this interaction promotes centrosomal subcellular location (By similarity). Binds to tubulins in mitotic cells upon DNA damage (By similarity). Interacts with GJA1 (By similarity). Interacts with DDX3X; this interaction enhances CSNK1D kinase activity in vitro, but it is unclear whether this interaction is physiologically relevant (By similarity). Interacts with FAM83A, FAM83B, FAM83E and FAM83H (via DUF1669) (By similarity).</text>
</comment>
<comment type="subcellular location">
    <subcellularLocation>
        <location evidence="1">Cytoplasm</location>
    </subcellularLocation>
    <subcellularLocation>
        <location evidence="1">Nucleus</location>
    </subcellularLocation>
    <subcellularLocation>
        <location evidence="1">Cytoplasm</location>
        <location evidence="1">Cytoskeleton</location>
        <location evidence="1">Microtubule organizing center</location>
        <location evidence="1">Centrosome</location>
    </subcellularLocation>
    <subcellularLocation>
        <location evidence="1">Cytoplasm</location>
        <location evidence="1">Perinuclear region</location>
    </subcellularLocation>
    <subcellularLocation>
        <location evidence="1">Cell membrane</location>
    </subcellularLocation>
    <subcellularLocation>
        <location evidence="1">Cytoplasm</location>
        <location evidence="1">Cytoskeleton</location>
        <location evidence="1">Spindle</location>
    </subcellularLocation>
    <subcellularLocation>
        <location evidence="1">Golgi apparatus</location>
    </subcellularLocation>
    <text evidence="1">Localized at mitotic spindle microtubules, and at the centrosomes and interphase in interphase cells. Recruited to the spindle apparatus and the centrosomes in response to DNA-damage. Correct subcellular localization requires kinase activity (By similarity).</text>
</comment>
<comment type="PTM">
    <text evidence="1">Autophosphorylated on serine and threonine residues; this autophosphorylation represses activity. Reactivated by phosphatase-mediated dephosphorylation. May be dephosphorylated by PP1 (By similarity).</text>
</comment>
<comment type="similarity">
    <text evidence="8">Belongs to the protein kinase superfamily. CK1 Ser/Thr protein kinase family. Casein kinase I subfamily.</text>
</comment>
<reference key="1">
    <citation type="submission" date="2004-11" db="EMBL/GenBank/DDBJ databases">
        <authorList>
            <consortium name="The German cDNA consortium"/>
        </authorList>
    </citation>
    <scope>NUCLEOTIDE SEQUENCE [LARGE SCALE MRNA]</scope>
    <source>
        <tissue>Brain cortex</tissue>
    </source>
</reference>
<organism>
    <name type="scientific">Pongo abelii</name>
    <name type="common">Sumatran orangutan</name>
    <name type="synonym">Pongo pygmaeus abelii</name>
    <dbReference type="NCBI Taxonomy" id="9601"/>
    <lineage>
        <taxon>Eukaryota</taxon>
        <taxon>Metazoa</taxon>
        <taxon>Chordata</taxon>
        <taxon>Craniata</taxon>
        <taxon>Vertebrata</taxon>
        <taxon>Euteleostomi</taxon>
        <taxon>Mammalia</taxon>
        <taxon>Eutheria</taxon>
        <taxon>Euarchontoglires</taxon>
        <taxon>Primates</taxon>
        <taxon>Haplorrhini</taxon>
        <taxon>Catarrhini</taxon>
        <taxon>Hominidae</taxon>
        <taxon>Pongo</taxon>
    </lineage>
</organism>
<protein>
    <recommendedName>
        <fullName>Casein kinase I isoform delta</fullName>
        <shortName>CKI-delta</shortName>
        <shortName>CKId</shortName>
        <ecNumber evidence="2">2.7.11.1</ecNumber>
    </recommendedName>
    <alternativeName>
        <fullName>Tau-protein kinase CSNK1D</fullName>
        <ecNumber evidence="2">2.7.11.26</ecNumber>
    </alternativeName>
</protein>
<gene>
    <name type="primary">CSNK1D</name>
    <name type="synonym">HCKID</name>
</gene>
<feature type="chain" id="PRO_0000354086" description="Casein kinase I isoform delta">
    <location>
        <begin position="1"/>
        <end position="415"/>
    </location>
</feature>
<feature type="domain" description="Protein kinase" evidence="5">
    <location>
        <begin position="9"/>
        <end position="277"/>
    </location>
</feature>
<feature type="region of interest" description="Centrosomal localization signal (CLS)" evidence="1">
    <location>
        <begin position="278"/>
        <end position="364"/>
    </location>
</feature>
<feature type="region of interest" description="Disordered" evidence="7">
    <location>
        <begin position="301"/>
        <end position="415"/>
    </location>
</feature>
<feature type="region of interest" description="Autoinhibitory" evidence="1">
    <location>
        <begin position="317"/>
        <end position="342"/>
    </location>
</feature>
<feature type="compositionally biased region" description="Basic and acidic residues" evidence="7">
    <location>
        <begin position="301"/>
        <end position="315"/>
    </location>
</feature>
<feature type="compositionally biased region" description="Polar residues" evidence="7">
    <location>
        <begin position="347"/>
        <end position="358"/>
    </location>
</feature>
<feature type="compositionally biased region" description="Polar residues" evidence="7">
    <location>
        <begin position="380"/>
        <end position="400"/>
    </location>
</feature>
<feature type="active site" description="Proton acceptor" evidence="5 6">
    <location>
        <position position="128"/>
    </location>
</feature>
<feature type="binding site" evidence="5">
    <location>
        <begin position="15"/>
        <end position="23"/>
    </location>
    <ligand>
        <name>ATP</name>
        <dbReference type="ChEBI" id="CHEBI:30616"/>
    </ligand>
</feature>
<feature type="binding site" evidence="5">
    <location>
        <position position="38"/>
    </location>
    <ligand>
        <name>ATP</name>
        <dbReference type="ChEBI" id="CHEBI:30616"/>
    </ligand>
</feature>
<feature type="modified residue" description="Phosphoserine" evidence="2">
    <location>
        <position position="328"/>
    </location>
</feature>
<feature type="modified residue" description="Phosphoserine" evidence="2">
    <location>
        <position position="331"/>
    </location>
</feature>
<feature type="modified residue" description="Phosphoserine" evidence="3">
    <location>
        <position position="370"/>
    </location>
</feature>
<feature type="modified residue" description="Omega-N-methylarginine" evidence="4">
    <location>
        <position position="375"/>
    </location>
</feature>
<feature type="modified residue" description="Phosphoserine" evidence="2">
    <location>
        <position position="382"/>
    </location>
</feature>
<feature type="modified residue" description="Phosphoserine" evidence="2">
    <location>
        <position position="383"/>
    </location>
</feature>
<feature type="modified residue" description="Phosphoserine" evidence="2">
    <location>
        <position position="384"/>
    </location>
</feature>
<feature type="modified residue" description="Phosphoserine" evidence="2">
    <location>
        <position position="407"/>
    </location>
</feature>
<feature type="modified residue" description="Phosphoserine" evidence="2">
    <location>
        <position position="411"/>
    </location>
</feature>
<evidence type="ECO:0000250" key="1"/>
<evidence type="ECO:0000250" key="2">
    <source>
        <dbReference type="UniProtKB" id="P48730"/>
    </source>
</evidence>
<evidence type="ECO:0000250" key="3">
    <source>
        <dbReference type="UniProtKB" id="Q06486"/>
    </source>
</evidence>
<evidence type="ECO:0000250" key="4">
    <source>
        <dbReference type="UniProtKB" id="Q9DC28"/>
    </source>
</evidence>
<evidence type="ECO:0000255" key="5">
    <source>
        <dbReference type="PROSITE-ProRule" id="PRU00159"/>
    </source>
</evidence>
<evidence type="ECO:0000255" key="6">
    <source>
        <dbReference type="PROSITE-ProRule" id="PRU10027"/>
    </source>
</evidence>
<evidence type="ECO:0000256" key="7">
    <source>
        <dbReference type="SAM" id="MobiDB-lite"/>
    </source>
</evidence>
<evidence type="ECO:0000305" key="8"/>
<proteinExistence type="evidence at transcript level"/>
<dbReference type="EC" id="2.7.11.1" evidence="2"/>
<dbReference type="EC" id="2.7.11.26" evidence="2"/>
<dbReference type="EMBL" id="CR858408">
    <property type="protein sequence ID" value="CAH90635.1"/>
    <property type="molecule type" value="mRNA"/>
</dbReference>
<dbReference type="RefSeq" id="NP_001125343.1">
    <property type="nucleotide sequence ID" value="NM_001131871.1"/>
</dbReference>
<dbReference type="SMR" id="Q5RC72"/>
<dbReference type="FunCoup" id="Q5RC72">
    <property type="interactions" value="4508"/>
</dbReference>
<dbReference type="STRING" id="9601.ENSPPYP00000009846"/>
<dbReference type="GeneID" id="100172245"/>
<dbReference type="KEGG" id="pon:100172245"/>
<dbReference type="CTD" id="1453"/>
<dbReference type="eggNOG" id="KOG1164">
    <property type="taxonomic scope" value="Eukaryota"/>
</dbReference>
<dbReference type="InParanoid" id="Q5RC72"/>
<dbReference type="OrthoDB" id="5800476at2759"/>
<dbReference type="Proteomes" id="UP000001595">
    <property type="component" value="Unplaced"/>
</dbReference>
<dbReference type="GO" id="GO:0005813">
    <property type="term" value="C:centrosome"/>
    <property type="evidence" value="ECO:0007669"/>
    <property type="project" value="UniProtKB-SubCell"/>
</dbReference>
<dbReference type="GO" id="GO:0005794">
    <property type="term" value="C:Golgi apparatus"/>
    <property type="evidence" value="ECO:0007669"/>
    <property type="project" value="UniProtKB-SubCell"/>
</dbReference>
<dbReference type="GO" id="GO:0005634">
    <property type="term" value="C:nucleus"/>
    <property type="evidence" value="ECO:0000250"/>
    <property type="project" value="UniProtKB"/>
</dbReference>
<dbReference type="GO" id="GO:0048471">
    <property type="term" value="C:perinuclear region of cytoplasm"/>
    <property type="evidence" value="ECO:0007669"/>
    <property type="project" value="UniProtKB-SubCell"/>
</dbReference>
<dbReference type="GO" id="GO:0005886">
    <property type="term" value="C:plasma membrane"/>
    <property type="evidence" value="ECO:0007669"/>
    <property type="project" value="UniProtKB-SubCell"/>
</dbReference>
<dbReference type="GO" id="GO:0005819">
    <property type="term" value="C:spindle"/>
    <property type="evidence" value="ECO:0007669"/>
    <property type="project" value="UniProtKB-SubCell"/>
</dbReference>
<dbReference type="GO" id="GO:0005524">
    <property type="term" value="F:ATP binding"/>
    <property type="evidence" value="ECO:0007669"/>
    <property type="project" value="UniProtKB-KW"/>
</dbReference>
<dbReference type="GO" id="GO:0004672">
    <property type="term" value="F:protein kinase activity"/>
    <property type="evidence" value="ECO:0000250"/>
    <property type="project" value="UniProtKB"/>
</dbReference>
<dbReference type="GO" id="GO:0106310">
    <property type="term" value="F:protein serine kinase activity"/>
    <property type="evidence" value="ECO:0007669"/>
    <property type="project" value="RHEA"/>
</dbReference>
<dbReference type="GO" id="GO:0004674">
    <property type="term" value="F:protein serine/threonine kinase activity"/>
    <property type="evidence" value="ECO:0007669"/>
    <property type="project" value="UniProtKB-KW"/>
</dbReference>
<dbReference type="GO" id="GO:0032922">
    <property type="term" value="P:circadian regulation of gene expression"/>
    <property type="evidence" value="ECO:0000250"/>
    <property type="project" value="UniProtKB"/>
</dbReference>
<dbReference type="GO" id="GO:0032436">
    <property type="term" value="P:positive regulation of proteasomal ubiquitin-dependent protein catabolic process"/>
    <property type="evidence" value="ECO:0000250"/>
    <property type="project" value="UniProtKB"/>
</dbReference>
<dbReference type="GO" id="GO:0006468">
    <property type="term" value="P:protein phosphorylation"/>
    <property type="evidence" value="ECO:0000250"/>
    <property type="project" value="UniProtKB"/>
</dbReference>
<dbReference type="GO" id="GO:0042752">
    <property type="term" value="P:regulation of circadian rhythm"/>
    <property type="evidence" value="ECO:0000250"/>
    <property type="project" value="UniProtKB"/>
</dbReference>
<dbReference type="GO" id="GO:0016055">
    <property type="term" value="P:Wnt signaling pathway"/>
    <property type="evidence" value="ECO:0007669"/>
    <property type="project" value="UniProtKB-KW"/>
</dbReference>
<dbReference type="CDD" id="cd14125">
    <property type="entry name" value="STKc_CK1_delta_epsilon"/>
    <property type="match status" value="1"/>
</dbReference>
<dbReference type="FunFam" id="1.10.510.10:FF:000194">
    <property type="entry name" value="Casein kinase I isoform delta"/>
    <property type="match status" value="1"/>
</dbReference>
<dbReference type="FunFam" id="3.30.200.20:FF:000538">
    <property type="entry name" value="Putative Casein kinase I"/>
    <property type="match status" value="1"/>
</dbReference>
<dbReference type="Gene3D" id="1.10.510.10">
    <property type="entry name" value="Transferase(Phosphotransferase) domain 1"/>
    <property type="match status" value="1"/>
</dbReference>
<dbReference type="InterPro" id="IPR050235">
    <property type="entry name" value="CK1_Ser-Thr_kinase"/>
</dbReference>
<dbReference type="InterPro" id="IPR011009">
    <property type="entry name" value="Kinase-like_dom_sf"/>
</dbReference>
<dbReference type="InterPro" id="IPR000719">
    <property type="entry name" value="Prot_kinase_dom"/>
</dbReference>
<dbReference type="InterPro" id="IPR017441">
    <property type="entry name" value="Protein_kinase_ATP_BS"/>
</dbReference>
<dbReference type="InterPro" id="IPR008271">
    <property type="entry name" value="Ser/Thr_kinase_AS"/>
</dbReference>
<dbReference type="PANTHER" id="PTHR11909">
    <property type="entry name" value="CASEIN KINASE-RELATED"/>
    <property type="match status" value="1"/>
</dbReference>
<dbReference type="Pfam" id="PF00069">
    <property type="entry name" value="Pkinase"/>
    <property type="match status" value="1"/>
</dbReference>
<dbReference type="SMART" id="SM00220">
    <property type="entry name" value="S_TKc"/>
    <property type="match status" value="1"/>
</dbReference>
<dbReference type="SUPFAM" id="SSF56112">
    <property type="entry name" value="Protein kinase-like (PK-like)"/>
    <property type="match status" value="1"/>
</dbReference>
<dbReference type="PROSITE" id="PS00107">
    <property type="entry name" value="PROTEIN_KINASE_ATP"/>
    <property type="match status" value="1"/>
</dbReference>
<dbReference type="PROSITE" id="PS50011">
    <property type="entry name" value="PROTEIN_KINASE_DOM"/>
    <property type="match status" value="1"/>
</dbReference>
<dbReference type="PROSITE" id="PS00108">
    <property type="entry name" value="PROTEIN_KINASE_ST"/>
    <property type="match status" value="1"/>
</dbReference>
<sequence>MELRVGNRYRLGRKIGSGSFGDIYLGTDIAAGEEVAIKLECVKTKPPQLHIESKIYKMMQGGVGIPTIRWCGAEGDYNVMVMELLGPSLEDLFNFCSRKFSLKTILLLADQMISRIEYIHSKNFIHRDVKPDNFLMGLGKKGNLVYIIDFGLAKKYRDARTHQHIPYRENKNLTGTARYASINTHLGIEQSRRDDLESLGYVLMYFNLGSLPWQGLKAATKRQKYERISEKKMSTPIEVLCKGYPSEFATYLNFCRSLRFDDKPDYSYLRQLFRNLFHRQGFSYDYVFDWNMLKFGASRAADDAERERRDREERLRHSRNPATRGLPSTASGRLRGTQEVAPPTPLTPTSHTANTSPRPVSGMERERKVSMRLHRGAPVNISSSDLTGRQDTSRMSTSQIPGRVASSGLQSVVHR</sequence>